<keyword id="KW-1185">Reference proteome</keyword>
<keyword id="KW-0686">Riboflavin biosynthesis</keyword>
<keyword id="KW-0808">Transferase</keyword>
<comment type="function">
    <text evidence="1">Catalyzes the formation of 6,7-dimethyl-8-ribityllumazine by condensation of 5-amino-6-(D-ribitylamino)uracil with 3,4-dihydroxy-2-butanone 4-phosphate. This is the penultimate step in the biosynthesis of riboflavin.</text>
</comment>
<comment type="catalytic activity">
    <reaction evidence="1">
        <text>(2S)-2-hydroxy-3-oxobutyl phosphate + 5-amino-6-(D-ribitylamino)uracil = 6,7-dimethyl-8-(1-D-ribityl)lumazine + phosphate + 2 H2O + H(+)</text>
        <dbReference type="Rhea" id="RHEA:26152"/>
        <dbReference type="ChEBI" id="CHEBI:15377"/>
        <dbReference type="ChEBI" id="CHEBI:15378"/>
        <dbReference type="ChEBI" id="CHEBI:15934"/>
        <dbReference type="ChEBI" id="CHEBI:43474"/>
        <dbReference type="ChEBI" id="CHEBI:58201"/>
        <dbReference type="ChEBI" id="CHEBI:58830"/>
        <dbReference type="EC" id="2.5.1.78"/>
    </reaction>
</comment>
<comment type="pathway">
    <text evidence="1">Cofactor biosynthesis; riboflavin biosynthesis; riboflavin from 2-hydroxy-3-oxobutyl phosphate and 5-amino-6-(D-ribitylamino)uracil: step 1/2.</text>
</comment>
<comment type="similarity">
    <text evidence="1">Belongs to the DMRL synthase family.</text>
</comment>
<protein>
    <recommendedName>
        <fullName evidence="1">6,7-dimethyl-8-ribityllumazine synthase</fullName>
        <shortName evidence="1">DMRL synthase</shortName>
        <shortName evidence="1">LS</shortName>
        <shortName evidence="1">Lumazine synthase</shortName>
        <ecNumber evidence="1">2.5.1.78</ecNumber>
    </recommendedName>
</protein>
<feature type="chain" id="PRO_0000134752" description="6,7-dimethyl-8-ribityllumazine synthase">
    <location>
        <begin position="1"/>
        <end position="155"/>
    </location>
</feature>
<feature type="active site" description="Proton donor" evidence="1">
    <location>
        <position position="88"/>
    </location>
</feature>
<feature type="binding site" evidence="1">
    <location>
        <position position="22"/>
    </location>
    <ligand>
        <name>5-amino-6-(D-ribitylamino)uracil</name>
        <dbReference type="ChEBI" id="CHEBI:15934"/>
    </ligand>
</feature>
<feature type="binding site" evidence="1">
    <location>
        <begin position="56"/>
        <end position="58"/>
    </location>
    <ligand>
        <name>5-amino-6-(D-ribitylamino)uracil</name>
        <dbReference type="ChEBI" id="CHEBI:15934"/>
    </ligand>
</feature>
<feature type="binding site" evidence="1">
    <location>
        <begin position="80"/>
        <end position="82"/>
    </location>
    <ligand>
        <name>5-amino-6-(D-ribitylamino)uracil</name>
        <dbReference type="ChEBI" id="CHEBI:15934"/>
    </ligand>
</feature>
<feature type="binding site" evidence="1">
    <location>
        <begin position="85"/>
        <end position="86"/>
    </location>
    <ligand>
        <name>(2S)-2-hydroxy-3-oxobutyl phosphate</name>
        <dbReference type="ChEBI" id="CHEBI:58830"/>
    </ligand>
</feature>
<feature type="binding site" evidence="1">
    <location>
        <position position="113"/>
    </location>
    <ligand>
        <name>5-amino-6-(D-ribitylamino)uracil</name>
        <dbReference type="ChEBI" id="CHEBI:15934"/>
    </ligand>
</feature>
<feature type="binding site" evidence="1">
    <location>
        <position position="127"/>
    </location>
    <ligand>
        <name>(2S)-2-hydroxy-3-oxobutyl phosphate</name>
        <dbReference type="ChEBI" id="CHEBI:58830"/>
    </ligand>
</feature>
<evidence type="ECO:0000255" key="1">
    <source>
        <dbReference type="HAMAP-Rule" id="MF_00178"/>
    </source>
</evidence>
<sequence length="155" mass="16616">MQRIEATLLAHDLKFALVSTRWNHLIVDRLVEGAELAFVQHGGKTENLDHFLVPGSYEVPLVARRLAETGRYDAVVCLGAVIKGDTDHYDFVAGGAANGILNTSLHTGVPVAFGVLTTDTVEQALNRAGIKAGNKGGEAVLAMIETANLLKQIER</sequence>
<dbReference type="EC" id="2.5.1.78" evidence="1"/>
<dbReference type="EMBL" id="AE000513">
    <property type="protein sequence ID" value="AAF09745.1"/>
    <property type="molecule type" value="Genomic_DNA"/>
</dbReference>
<dbReference type="PIR" id="B75553">
    <property type="entry name" value="B75553"/>
</dbReference>
<dbReference type="RefSeq" id="NP_293880.1">
    <property type="nucleotide sequence ID" value="NC_001263.1"/>
</dbReference>
<dbReference type="RefSeq" id="WP_010886802.1">
    <property type="nucleotide sequence ID" value="NC_001263.1"/>
</dbReference>
<dbReference type="SMR" id="Q9RXZ8"/>
<dbReference type="FunCoup" id="Q9RXZ8">
    <property type="interactions" value="462"/>
</dbReference>
<dbReference type="STRING" id="243230.DR_0156"/>
<dbReference type="PaxDb" id="243230-DR_0156"/>
<dbReference type="EnsemblBacteria" id="AAF09745">
    <property type="protein sequence ID" value="AAF09745"/>
    <property type="gene ID" value="DR_0156"/>
</dbReference>
<dbReference type="GeneID" id="69516387"/>
<dbReference type="KEGG" id="dra:DR_0156"/>
<dbReference type="PATRIC" id="fig|243230.17.peg.321"/>
<dbReference type="eggNOG" id="COG0054">
    <property type="taxonomic scope" value="Bacteria"/>
</dbReference>
<dbReference type="HOGENOM" id="CLU_089358_1_1_0"/>
<dbReference type="InParanoid" id="Q9RXZ8"/>
<dbReference type="OrthoDB" id="9809709at2"/>
<dbReference type="BRENDA" id="2.5.1.78">
    <property type="organism ID" value="1856"/>
</dbReference>
<dbReference type="UniPathway" id="UPA00275">
    <property type="reaction ID" value="UER00404"/>
</dbReference>
<dbReference type="Proteomes" id="UP000002524">
    <property type="component" value="Chromosome 1"/>
</dbReference>
<dbReference type="GO" id="GO:0005737">
    <property type="term" value="C:cytoplasm"/>
    <property type="evidence" value="ECO:0000318"/>
    <property type="project" value="GO_Central"/>
</dbReference>
<dbReference type="GO" id="GO:0005829">
    <property type="term" value="C:cytosol"/>
    <property type="evidence" value="ECO:0000318"/>
    <property type="project" value="GO_Central"/>
</dbReference>
<dbReference type="GO" id="GO:0009349">
    <property type="term" value="C:riboflavin synthase complex"/>
    <property type="evidence" value="ECO:0007669"/>
    <property type="project" value="InterPro"/>
</dbReference>
<dbReference type="GO" id="GO:0000906">
    <property type="term" value="F:6,7-dimethyl-8-ribityllumazine synthase activity"/>
    <property type="evidence" value="ECO:0000318"/>
    <property type="project" value="GO_Central"/>
</dbReference>
<dbReference type="GO" id="GO:0009231">
    <property type="term" value="P:riboflavin biosynthetic process"/>
    <property type="evidence" value="ECO:0000318"/>
    <property type="project" value="GO_Central"/>
</dbReference>
<dbReference type="CDD" id="cd09209">
    <property type="entry name" value="Lumazine_synthase-I"/>
    <property type="match status" value="1"/>
</dbReference>
<dbReference type="FunFam" id="3.40.50.960:FF:000001">
    <property type="entry name" value="6,7-dimethyl-8-ribityllumazine synthase"/>
    <property type="match status" value="1"/>
</dbReference>
<dbReference type="Gene3D" id="3.40.50.960">
    <property type="entry name" value="Lumazine/riboflavin synthase"/>
    <property type="match status" value="1"/>
</dbReference>
<dbReference type="HAMAP" id="MF_00178">
    <property type="entry name" value="Lumazine_synth"/>
    <property type="match status" value="1"/>
</dbReference>
<dbReference type="InterPro" id="IPR034964">
    <property type="entry name" value="LS"/>
</dbReference>
<dbReference type="InterPro" id="IPR002180">
    <property type="entry name" value="LS/RS"/>
</dbReference>
<dbReference type="InterPro" id="IPR036467">
    <property type="entry name" value="LS/RS_sf"/>
</dbReference>
<dbReference type="NCBIfam" id="TIGR00114">
    <property type="entry name" value="lumazine-synth"/>
    <property type="match status" value="1"/>
</dbReference>
<dbReference type="PANTHER" id="PTHR21058:SF0">
    <property type="entry name" value="6,7-DIMETHYL-8-RIBITYLLUMAZINE SYNTHASE"/>
    <property type="match status" value="1"/>
</dbReference>
<dbReference type="PANTHER" id="PTHR21058">
    <property type="entry name" value="6,7-DIMETHYL-8-RIBITYLLUMAZINE SYNTHASE DMRL SYNTHASE LUMAZINE SYNTHASE"/>
    <property type="match status" value="1"/>
</dbReference>
<dbReference type="Pfam" id="PF00885">
    <property type="entry name" value="DMRL_synthase"/>
    <property type="match status" value="1"/>
</dbReference>
<dbReference type="SUPFAM" id="SSF52121">
    <property type="entry name" value="Lumazine synthase"/>
    <property type="match status" value="1"/>
</dbReference>
<organism>
    <name type="scientific">Deinococcus radiodurans (strain ATCC 13939 / DSM 20539 / JCM 16871 / CCUG 27074 / LMG 4051 / NBRC 15346 / NCIMB 9279 / VKM B-1422 / R1)</name>
    <dbReference type="NCBI Taxonomy" id="243230"/>
    <lineage>
        <taxon>Bacteria</taxon>
        <taxon>Thermotogati</taxon>
        <taxon>Deinococcota</taxon>
        <taxon>Deinococci</taxon>
        <taxon>Deinococcales</taxon>
        <taxon>Deinococcaceae</taxon>
        <taxon>Deinococcus</taxon>
    </lineage>
</organism>
<accession>Q9RXZ8</accession>
<reference key="1">
    <citation type="journal article" date="1999" name="Science">
        <title>Genome sequence of the radioresistant bacterium Deinococcus radiodurans R1.</title>
        <authorList>
            <person name="White O."/>
            <person name="Eisen J.A."/>
            <person name="Heidelberg J.F."/>
            <person name="Hickey E.K."/>
            <person name="Peterson J.D."/>
            <person name="Dodson R.J."/>
            <person name="Haft D.H."/>
            <person name="Gwinn M.L."/>
            <person name="Nelson W.C."/>
            <person name="Richardson D.L."/>
            <person name="Moffat K.S."/>
            <person name="Qin H."/>
            <person name="Jiang L."/>
            <person name="Pamphile W."/>
            <person name="Crosby M."/>
            <person name="Shen M."/>
            <person name="Vamathevan J.J."/>
            <person name="Lam P."/>
            <person name="McDonald L.A."/>
            <person name="Utterback T.R."/>
            <person name="Zalewski C."/>
            <person name="Makarova K.S."/>
            <person name="Aravind L."/>
            <person name="Daly M.J."/>
            <person name="Minton K.W."/>
            <person name="Fleischmann R.D."/>
            <person name="Ketchum K.A."/>
            <person name="Nelson K.E."/>
            <person name="Salzberg S.L."/>
            <person name="Smith H.O."/>
            <person name="Venter J.C."/>
            <person name="Fraser C.M."/>
        </authorList>
    </citation>
    <scope>NUCLEOTIDE SEQUENCE [LARGE SCALE GENOMIC DNA]</scope>
    <source>
        <strain>ATCC 13939 / DSM 20539 / JCM 16871 / CCUG 27074 / LMG 4051 / NBRC 15346 / NCIMB 9279 / VKM B-1422 / R1</strain>
    </source>
</reference>
<gene>
    <name evidence="1" type="primary">ribH</name>
    <name type="ordered locus">DR_0156</name>
</gene>
<proteinExistence type="inferred from homology"/>
<name>RISB_DEIRA</name>